<sequence>MSVEAKVKKIIAEKLQGVDIEDVIPEASLVDDLGADSLALVELIMSMEEAFDIDIDDDDAEKMITVNDAIEYIRKKS</sequence>
<keyword id="KW-0963">Cytoplasm</keyword>
<keyword id="KW-0275">Fatty acid biosynthesis</keyword>
<keyword id="KW-0276">Fatty acid metabolism</keyword>
<keyword id="KW-0444">Lipid biosynthesis</keyword>
<keyword id="KW-0443">Lipid metabolism</keyword>
<keyword id="KW-0596">Phosphopantetheine</keyword>
<keyword id="KW-0597">Phosphoprotein</keyword>
<keyword id="KW-1185">Reference proteome</keyword>
<name>ACP_DESAH</name>
<evidence type="ECO:0000255" key="1">
    <source>
        <dbReference type="HAMAP-Rule" id="MF_01217"/>
    </source>
</evidence>
<evidence type="ECO:0000255" key="2">
    <source>
        <dbReference type="PROSITE-ProRule" id="PRU00258"/>
    </source>
</evidence>
<accession>C0QKX5</accession>
<proteinExistence type="inferred from homology"/>
<protein>
    <recommendedName>
        <fullName evidence="1">Acyl carrier protein</fullName>
        <shortName evidence="1">ACP</shortName>
    </recommendedName>
</protein>
<gene>
    <name evidence="1" type="primary">acpP</name>
    <name type="ordered locus">HRM2_31320</name>
</gene>
<reference key="1">
    <citation type="journal article" date="2009" name="Environ. Microbiol.">
        <title>Genome sequence of Desulfobacterium autotrophicum HRM2, a marine sulfate reducer oxidizing organic carbon completely to carbon dioxide.</title>
        <authorList>
            <person name="Strittmatter A.W."/>
            <person name="Liesegang H."/>
            <person name="Rabus R."/>
            <person name="Decker I."/>
            <person name="Amann J."/>
            <person name="Andres S."/>
            <person name="Henne A."/>
            <person name="Fricke W.F."/>
            <person name="Martinez-Arias R."/>
            <person name="Bartels D."/>
            <person name="Goesmann A."/>
            <person name="Krause L."/>
            <person name="Puehler A."/>
            <person name="Klenk H.P."/>
            <person name="Richter M."/>
            <person name="Schuler M."/>
            <person name="Gloeckner F.O."/>
            <person name="Meyerdierks A."/>
            <person name="Gottschalk G."/>
            <person name="Amann R."/>
        </authorList>
    </citation>
    <scope>NUCLEOTIDE SEQUENCE [LARGE SCALE GENOMIC DNA]</scope>
    <source>
        <strain>ATCC 43914 / DSM 3382 / VKM B-1955 / HRM2</strain>
    </source>
</reference>
<organism>
    <name type="scientific">Desulforapulum autotrophicum (strain ATCC 43914 / DSM 3382 / VKM B-1955 / HRM2)</name>
    <name type="common">Desulfobacterium autotrophicum</name>
    <dbReference type="NCBI Taxonomy" id="177437"/>
    <lineage>
        <taxon>Bacteria</taxon>
        <taxon>Pseudomonadati</taxon>
        <taxon>Thermodesulfobacteriota</taxon>
        <taxon>Desulfobacteria</taxon>
        <taxon>Desulfobacterales</taxon>
        <taxon>Desulfobacteraceae</taxon>
        <taxon>Desulforapulum</taxon>
    </lineage>
</organism>
<comment type="function">
    <text evidence="1">Carrier of the growing fatty acid chain in fatty acid biosynthesis.</text>
</comment>
<comment type="pathway">
    <text evidence="1">Lipid metabolism; fatty acid biosynthesis.</text>
</comment>
<comment type="subcellular location">
    <subcellularLocation>
        <location evidence="1">Cytoplasm</location>
    </subcellularLocation>
</comment>
<comment type="PTM">
    <text evidence="1">4'-phosphopantetheine is transferred from CoA to a specific serine of apo-ACP by AcpS. This modification is essential for activity because fatty acids are bound in thioester linkage to the sulfhydryl of the prosthetic group.</text>
</comment>
<comment type="similarity">
    <text evidence="1">Belongs to the acyl carrier protein (ACP) family.</text>
</comment>
<feature type="chain" id="PRO_1000213904" description="Acyl carrier protein">
    <location>
        <begin position="1"/>
        <end position="77"/>
    </location>
</feature>
<feature type="domain" description="Carrier" evidence="2">
    <location>
        <begin position="1"/>
        <end position="77"/>
    </location>
</feature>
<feature type="modified residue" description="O-(pantetheine 4'-phosphoryl)serine" evidence="2">
    <location>
        <position position="37"/>
    </location>
</feature>
<dbReference type="EMBL" id="CP001087">
    <property type="protein sequence ID" value="ACN16215.1"/>
    <property type="molecule type" value="Genomic_DNA"/>
</dbReference>
<dbReference type="RefSeq" id="WP_015904977.1">
    <property type="nucleotide sequence ID" value="NC_012108.1"/>
</dbReference>
<dbReference type="SMR" id="C0QKX5"/>
<dbReference type="STRING" id="177437.HRM2_31320"/>
<dbReference type="KEGG" id="dat:HRM2_31320"/>
<dbReference type="eggNOG" id="COG0236">
    <property type="taxonomic scope" value="Bacteria"/>
</dbReference>
<dbReference type="HOGENOM" id="CLU_108696_5_1_7"/>
<dbReference type="OrthoDB" id="9804551at2"/>
<dbReference type="UniPathway" id="UPA00094"/>
<dbReference type="Proteomes" id="UP000000442">
    <property type="component" value="Chromosome"/>
</dbReference>
<dbReference type="GO" id="GO:0005829">
    <property type="term" value="C:cytosol"/>
    <property type="evidence" value="ECO:0007669"/>
    <property type="project" value="TreeGrafter"/>
</dbReference>
<dbReference type="GO" id="GO:0016020">
    <property type="term" value="C:membrane"/>
    <property type="evidence" value="ECO:0007669"/>
    <property type="project" value="GOC"/>
</dbReference>
<dbReference type="GO" id="GO:0000035">
    <property type="term" value="F:acyl binding"/>
    <property type="evidence" value="ECO:0007669"/>
    <property type="project" value="TreeGrafter"/>
</dbReference>
<dbReference type="GO" id="GO:0000036">
    <property type="term" value="F:acyl carrier activity"/>
    <property type="evidence" value="ECO:0007669"/>
    <property type="project" value="UniProtKB-UniRule"/>
</dbReference>
<dbReference type="GO" id="GO:0009245">
    <property type="term" value="P:lipid A biosynthetic process"/>
    <property type="evidence" value="ECO:0007669"/>
    <property type="project" value="TreeGrafter"/>
</dbReference>
<dbReference type="Gene3D" id="1.10.1200.10">
    <property type="entry name" value="ACP-like"/>
    <property type="match status" value="1"/>
</dbReference>
<dbReference type="HAMAP" id="MF_01217">
    <property type="entry name" value="Acyl_carrier"/>
    <property type="match status" value="1"/>
</dbReference>
<dbReference type="InterPro" id="IPR003231">
    <property type="entry name" value="ACP"/>
</dbReference>
<dbReference type="InterPro" id="IPR036736">
    <property type="entry name" value="ACP-like_sf"/>
</dbReference>
<dbReference type="InterPro" id="IPR009081">
    <property type="entry name" value="PP-bd_ACP"/>
</dbReference>
<dbReference type="InterPro" id="IPR006162">
    <property type="entry name" value="Ppantetheine_attach_site"/>
</dbReference>
<dbReference type="NCBIfam" id="TIGR00517">
    <property type="entry name" value="acyl_carrier"/>
    <property type="match status" value="1"/>
</dbReference>
<dbReference type="NCBIfam" id="NF002148">
    <property type="entry name" value="PRK00982.1-2"/>
    <property type="match status" value="1"/>
</dbReference>
<dbReference type="NCBIfam" id="NF002150">
    <property type="entry name" value="PRK00982.1-4"/>
    <property type="match status" value="1"/>
</dbReference>
<dbReference type="PANTHER" id="PTHR20863">
    <property type="entry name" value="ACYL CARRIER PROTEIN"/>
    <property type="match status" value="1"/>
</dbReference>
<dbReference type="PANTHER" id="PTHR20863:SF76">
    <property type="entry name" value="CARRIER DOMAIN-CONTAINING PROTEIN"/>
    <property type="match status" value="1"/>
</dbReference>
<dbReference type="Pfam" id="PF00550">
    <property type="entry name" value="PP-binding"/>
    <property type="match status" value="1"/>
</dbReference>
<dbReference type="SUPFAM" id="SSF47336">
    <property type="entry name" value="ACP-like"/>
    <property type="match status" value="1"/>
</dbReference>
<dbReference type="PROSITE" id="PS50075">
    <property type="entry name" value="CARRIER"/>
    <property type="match status" value="1"/>
</dbReference>
<dbReference type="PROSITE" id="PS00012">
    <property type="entry name" value="PHOSPHOPANTETHEINE"/>
    <property type="match status" value="1"/>
</dbReference>